<accession>B0C2F0</accession>
<proteinExistence type="inferred from homology"/>
<reference key="1">
    <citation type="journal article" date="2008" name="Proc. Natl. Acad. Sci. U.S.A.">
        <title>Niche adaptation and genome expansion in the chlorophyll d-producing cyanobacterium Acaryochloris marina.</title>
        <authorList>
            <person name="Swingley W.D."/>
            <person name="Chen M."/>
            <person name="Cheung P.C."/>
            <person name="Conrad A.L."/>
            <person name="Dejesa L.C."/>
            <person name="Hao J."/>
            <person name="Honchak B.M."/>
            <person name="Karbach L.E."/>
            <person name="Kurdoglu A."/>
            <person name="Lahiri S."/>
            <person name="Mastrian S.D."/>
            <person name="Miyashita H."/>
            <person name="Page L."/>
            <person name="Ramakrishna P."/>
            <person name="Satoh S."/>
            <person name="Sattley W.M."/>
            <person name="Shimada Y."/>
            <person name="Taylor H.L."/>
            <person name="Tomo T."/>
            <person name="Tsuchiya T."/>
            <person name="Wang Z.T."/>
            <person name="Raymond J."/>
            <person name="Mimuro M."/>
            <person name="Blankenship R.E."/>
            <person name="Touchman J.W."/>
        </authorList>
    </citation>
    <scope>NUCLEOTIDE SEQUENCE [LARGE SCALE GENOMIC DNA]</scope>
    <source>
        <strain>MBIC 11017</strain>
    </source>
</reference>
<sequence>MSTTAITILGTGVWGSALGTLAQANHHTVTAWSRRGPLTLTQSLAQAQVLVVAISMKGIPDLAAQLQQLKLPTSTIIVSATKGLDPATLRTPSQIWQATFPNNPVLVLSGPNLSKEIEQRLPAATVVAGPNQAAVETVQQLFSSDCFRVYTNPDQLGTELGGTLKNVIAISVGVCEGLKLGTNARAALITRALPEMIRVGTHLGGQAETFFGLSGLGDLLATCTSPLSRNYQVGYQLAQGKSLPEILDQLHGTAEGVNTTNVLVDLANREGIPIPIARQVHRLLKGRITPQEALESLMDRELKPEACDLL</sequence>
<dbReference type="EC" id="1.1.1.94" evidence="1"/>
<dbReference type="EMBL" id="CP000828">
    <property type="protein sequence ID" value="ABW29740.1"/>
    <property type="molecule type" value="Genomic_DNA"/>
</dbReference>
<dbReference type="RefSeq" id="WP_012165023.1">
    <property type="nucleotide sequence ID" value="NC_009925.1"/>
</dbReference>
<dbReference type="SMR" id="B0C2F0"/>
<dbReference type="STRING" id="329726.AM1_4768"/>
<dbReference type="KEGG" id="amr:AM1_4768"/>
<dbReference type="eggNOG" id="COG0240">
    <property type="taxonomic scope" value="Bacteria"/>
</dbReference>
<dbReference type="HOGENOM" id="CLU_033449_0_2_3"/>
<dbReference type="OrthoDB" id="9812273at2"/>
<dbReference type="UniPathway" id="UPA00940"/>
<dbReference type="Proteomes" id="UP000000268">
    <property type="component" value="Chromosome"/>
</dbReference>
<dbReference type="GO" id="GO:0005829">
    <property type="term" value="C:cytosol"/>
    <property type="evidence" value="ECO:0007669"/>
    <property type="project" value="TreeGrafter"/>
</dbReference>
<dbReference type="GO" id="GO:0047952">
    <property type="term" value="F:glycerol-3-phosphate dehydrogenase [NAD(P)+] activity"/>
    <property type="evidence" value="ECO:0007669"/>
    <property type="project" value="UniProtKB-UniRule"/>
</dbReference>
<dbReference type="GO" id="GO:0051287">
    <property type="term" value="F:NAD binding"/>
    <property type="evidence" value="ECO:0007669"/>
    <property type="project" value="InterPro"/>
</dbReference>
<dbReference type="GO" id="GO:0005975">
    <property type="term" value="P:carbohydrate metabolic process"/>
    <property type="evidence" value="ECO:0007669"/>
    <property type="project" value="InterPro"/>
</dbReference>
<dbReference type="GO" id="GO:0046167">
    <property type="term" value="P:glycerol-3-phosphate biosynthetic process"/>
    <property type="evidence" value="ECO:0007669"/>
    <property type="project" value="UniProtKB-UniRule"/>
</dbReference>
<dbReference type="GO" id="GO:0046168">
    <property type="term" value="P:glycerol-3-phosphate catabolic process"/>
    <property type="evidence" value="ECO:0007669"/>
    <property type="project" value="InterPro"/>
</dbReference>
<dbReference type="GO" id="GO:0006650">
    <property type="term" value="P:glycerophospholipid metabolic process"/>
    <property type="evidence" value="ECO:0007669"/>
    <property type="project" value="UniProtKB-UniRule"/>
</dbReference>
<dbReference type="GO" id="GO:0008654">
    <property type="term" value="P:phospholipid biosynthetic process"/>
    <property type="evidence" value="ECO:0007669"/>
    <property type="project" value="UniProtKB-KW"/>
</dbReference>
<dbReference type="FunFam" id="1.10.1040.10:FF:000001">
    <property type="entry name" value="Glycerol-3-phosphate dehydrogenase [NAD(P)+]"/>
    <property type="match status" value="1"/>
</dbReference>
<dbReference type="FunFam" id="3.40.50.720:FF:001174">
    <property type="entry name" value="Glycerol-3-phosphate dehydrogenase [NAD(P)+]"/>
    <property type="match status" value="1"/>
</dbReference>
<dbReference type="Gene3D" id="1.10.1040.10">
    <property type="entry name" value="N-(1-d-carboxylethyl)-l-norvaline Dehydrogenase, domain 2"/>
    <property type="match status" value="1"/>
</dbReference>
<dbReference type="Gene3D" id="3.40.50.720">
    <property type="entry name" value="NAD(P)-binding Rossmann-like Domain"/>
    <property type="match status" value="2"/>
</dbReference>
<dbReference type="HAMAP" id="MF_00394">
    <property type="entry name" value="NAD_Glyc3P_dehydrog"/>
    <property type="match status" value="1"/>
</dbReference>
<dbReference type="InterPro" id="IPR008927">
    <property type="entry name" value="6-PGluconate_DH-like_C_sf"/>
</dbReference>
<dbReference type="InterPro" id="IPR013328">
    <property type="entry name" value="6PGD_dom2"/>
</dbReference>
<dbReference type="InterPro" id="IPR006168">
    <property type="entry name" value="G3P_DH_NAD-dep"/>
</dbReference>
<dbReference type="InterPro" id="IPR006109">
    <property type="entry name" value="G3P_DH_NAD-dep_C"/>
</dbReference>
<dbReference type="InterPro" id="IPR011128">
    <property type="entry name" value="G3P_DH_NAD-dep_N"/>
</dbReference>
<dbReference type="InterPro" id="IPR036291">
    <property type="entry name" value="NAD(P)-bd_dom_sf"/>
</dbReference>
<dbReference type="NCBIfam" id="NF000940">
    <property type="entry name" value="PRK00094.1-2"/>
    <property type="match status" value="1"/>
</dbReference>
<dbReference type="NCBIfam" id="NF000942">
    <property type="entry name" value="PRK00094.1-4"/>
    <property type="match status" value="1"/>
</dbReference>
<dbReference type="NCBIfam" id="NF011212">
    <property type="entry name" value="PRK14619.1"/>
    <property type="match status" value="1"/>
</dbReference>
<dbReference type="PANTHER" id="PTHR11728">
    <property type="entry name" value="GLYCEROL-3-PHOSPHATE DEHYDROGENASE"/>
    <property type="match status" value="1"/>
</dbReference>
<dbReference type="PANTHER" id="PTHR11728:SF1">
    <property type="entry name" value="GLYCEROL-3-PHOSPHATE DEHYDROGENASE [NAD(+)] 2, CHLOROPLASTIC"/>
    <property type="match status" value="1"/>
</dbReference>
<dbReference type="Pfam" id="PF07479">
    <property type="entry name" value="NAD_Gly3P_dh_C"/>
    <property type="match status" value="1"/>
</dbReference>
<dbReference type="Pfam" id="PF01210">
    <property type="entry name" value="NAD_Gly3P_dh_N"/>
    <property type="match status" value="1"/>
</dbReference>
<dbReference type="PIRSF" id="PIRSF000114">
    <property type="entry name" value="Glycerol-3-P_dh"/>
    <property type="match status" value="1"/>
</dbReference>
<dbReference type="SUPFAM" id="SSF48179">
    <property type="entry name" value="6-phosphogluconate dehydrogenase C-terminal domain-like"/>
    <property type="match status" value="1"/>
</dbReference>
<dbReference type="SUPFAM" id="SSF51735">
    <property type="entry name" value="NAD(P)-binding Rossmann-fold domains"/>
    <property type="match status" value="1"/>
</dbReference>
<dbReference type="PROSITE" id="PS00957">
    <property type="entry name" value="NAD_G3PDH"/>
    <property type="match status" value="1"/>
</dbReference>
<organism>
    <name type="scientific">Acaryochloris marina (strain MBIC 11017)</name>
    <dbReference type="NCBI Taxonomy" id="329726"/>
    <lineage>
        <taxon>Bacteria</taxon>
        <taxon>Bacillati</taxon>
        <taxon>Cyanobacteriota</taxon>
        <taxon>Cyanophyceae</taxon>
        <taxon>Acaryochloridales</taxon>
        <taxon>Acaryochloridaceae</taxon>
        <taxon>Acaryochloris</taxon>
    </lineage>
</organism>
<keyword id="KW-0963">Cytoplasm</keyword>
<keyword id="KW-0444">Lipid biosynthesis</keyword>
<keyword id="KW-0443">Lipid metabolism</keyword>
<keyword id="KW-0520">NAD</keyword>
<keyword id="KW-0521">NADP</keyword>
<keyword id="KW-0547">Nucleotide-binding</keyword>
<keyword id="KW-0560">Oxidoreductase</keyword>
<keyword id="KW-0594">Phospholipid biosynthesis</keyword>
<keyword id="KW-1208">Phospholipid metabolism</keyword>
<keyword id="KW-1185">Reference proteome</keyword>
<protein>
    <recommendedName>
        <fullName evidence="1">Glycerol-3-phosphate dehydrogenase [NAD(P)+]</fullName>
        <ecNumber evidence="1">1.1.1.94</ecNumber>
    </recommendedName>
    <alternativeName>
        <fullName evidence="1">NAD(P)(+)-dependent glycerol-3-phosphate dehydrogenase</fullName>
    </alternativeName>
    <alternativeName>
        <fullName evidence="1">NAD(P)H-dependent dihydroxyacetone-phosphate reductase</fullName>
    </alternativeName>
</protein>
<comment type="function">
    <text evidence="1">Catalyzes the reduction of the glycolytic intermediate dihydroxyacetone phosphate (DHAP) to sn-glycerol 3-phosphate (G3P), the key precursor for phospholipid synthesis.</text>
</comment>
<comment type="catalytic activity">
    <reaction evidence="1">
        <text>sn-glycerol 3-phosphate + NAD(+) = dihydroxyacetone phosphate + NADH + H(+)</text>
        <dbReference type="Rhea" id="RHEA:11092"/>
        <dbReference type="ChEBI" id="CHEBI:15378"/>
        <dbReference type="ChEBI" id="CHEBI:57540"/>
        <dbReference type="ChEBI" id="CHEBI:57597"/>
        <dbReference type="ChEBI" id="CHEBI:57642"/>
        <dbReference type="ChEBI" id="CHEBI:57945"/>
        <dbReference type="EC" id="1.1.1.94"/>
    </reaction>
    <physiologicalReaction direction="right-to-left" evidence="1">
        <dbReference type="Rhea" id="RHEA:11094"/>
    </physiologicalReaction>
</comment>
<comment type="catalytic activity">
    <reaction evidence="1">
        <text>sn-glycerol 3-phosphate + NADP(+) = dihydroxyacetone phosphate + NADPH + H(+)</text>
        <dbReference type="Rhea" id="RHEA:11096"/>
        <dbReference type="ChEBI" id="CHEBI:15378"/>
        <dbReference type="ChEBI" id="CHEBI:57597"/>
        <dbReference type="ChEBI" id="CHEBI:57642"/>
        <dbReference type="ChEBI" id="CHEBI:57783"/>
        <dbReference type="ChEBI" id="CHEBI:58349"/>
        <dbReference type="EC" id="1.1.1.94"/>
    </reaction>
    <physiologicalReaction direction="right-to-left" evidence="1">
        <dbReference type="Rhea" id="RHEA:11098"/>
    </physiologicalReaction>
</comment>
<comment type="pathway">
    <text evidence="1">Membrane lipid metabolism; glycerophospholipid metabolism.</text>
</comment>
<comment type="subcellular location">
    <subcellularLocation>
        <location evidence="1">Cytoplasm</location>
    </subcellularLocation>
</comment>
<comment type="similarity">
    <text evidence="1">Belongs to the NAD-dependent glycerol-3-phosphate dehydrogenase family.</text>
</comment>
<evidence type="ECO:0000255" key="1">
    <source>
        <dbReference type="HAMAP-Rule" id="MF_00394"/>
    </source>
</evidence>
<gene>
    <name evidence="1" type="primary">gpsA</name>
    <name type="ordered locus">AM1_4768</name>
</gene>
<feature type="chain" id="PRO_1000080295" description="Glycerol-3-phosphate dehydrogenase [NAD(P)+]">
    <location>
        <begin position="1"/>
        <end position="310"/>
    </location>
</feature>
<feature type="active site" description="Proton acceptor" evidence="1">
    <location>
        <position position="165"/>
    </location>
</feature>
<feature type="binding site" evidence="1">
    <location>
        <position position="14"/>
    </location>
    <ligand>
        <name>NADPH</name>
        <dbReference type="ChEBI" id="CHEBI:57783"/>
    </ligand>
</feature>
<feature type="binding site" evidence="1">
    <location>
        <position position="34"/>
    </location>
    <ligand>
        <name>NADPH</name>
        <dbReference type="ChEBI" id="CHEBI:57783"/>
    </ligand>
</feature>
<feature type="binding site" evidence="1">
    <location>
        <position position="35"/>
    </location>
    <ligand>
        <name>NADPH</name>
        <dbReference type="ChEBI" id="CHEBI:57783"/>
    </ligand>
</feature>
<feature type="binding site" evidence="1">
    <location>
        <position position="82"/>
    </location>
    <ligand>
        <name>NADPH</name>
        <dbReference type="ChEBI" id="CHEBI:57783"/>
    </ligand>
</feature>
<feature type="binding site" evidence="1">
    <location>
        <position position="82"/>
    </location>
    <ligand>
        <name>sn-glycerol 3-phosphate</name>
        <dbReference type="ChEBI" id="CHEBI:57597"/>
    </ligand>
</feature>
<feature type="binding site" evidence="1">
    <location>
        <position position="110"/>
    </location>
    <ligand>
        <name>sn-glycerol 3-phosphate</name>
        <dbReference type="ChEBI" id="CHEBI:57597"/>
    </ligand>
</feature>
<feature type="binding site" evidence="1">
    <location>
        <position position="114"/>
    </location>
    <ligand>
        <name>NADPH</name>
        <dbReference type="ChEBI" id="CHEBI:57783"/>
    </ligand>
</feature>
<feature type="binding site" evidence="1">
    <location>
        <position position="165"/>
    </location>
    <ligand>
        <name>sn-glycerol 3-phosphate</name>
        <dbReference type="ChEBI" id="CHEBI:57597"/>
    </ligand>
</feature>
<feature type="binding site" evidence="1">
    <location>
        <position position="218"/>
    </location>
    <ligand>
        <name>sn-glycerol 3-phosphate</name>
        <dbReference type="ChEBI" id="CHEBI:57597"/>
    </ligand>
</feature>
<feature type="binding site" evidence="1">
    <location>
        <position position="228"/>
    </location>
    <ligand>
        <name>sn-glycerol 3-phosphate</name>
        <dbReference type="ChEBI" id="CHEBI:57597"/>
    </ligand>
</feature>
<feature type="binding site" evidence="1">
    <location>
        <position position="229"/>
    </location>
    <ligand>
        <name>NADPH</name>
        <dbReference type="ChEBI" id="CHEBI:57783"/>
    </ligand>
</feature>
<feature type="binding site" evidence="1">
    <location>
        <position position="229"/>
    </location>
    <ligand>
        <name>sn-glycerol 3-phosphate</name>
        <dbReference type="ChEBI" id="CHEBI:57597"/>
    </ligand>
</feature>
<feature type="binding site" evidence="1">
    <location>
        <position position="230"/>
    </location>
    <ligand>
        <name>sn-glycerol 3-phosphate</name>
        <dbReference type="ChEBI" id="CHEBI:57597"/>
    </ligand>
</feature>
<feature type="binding site" evidence="1">
    <location>
        <position position="255"/>
    </location>
    <ligand>
        <name>NADPH</name>
        <dbReference type="ChEBI" id="CHEBI:57783"/>
    </ligand>
</feature>
<name>GPDA_ACAM1</name>